<comment type="function">
    <text evidence="1">This protein is involved in the repair of mismatches in DNA. It is possible that it carries out the mismatch recognition step. This protein has a weak ATPase activity.</text>
</comment>
<comment type="similarity">
    <text evidence="1">Belongs to the DNA mismatch repair MutS family.</text>
</comment>
<comment type="sequence caution" evidence="3">
    <conflict type="erroneous initiation">
        <sequence resource="EMBL-CDS" id="AAV81585"/>
    </conflict>
</comment>
<keyword id="KW-0067">ATP-binding</keyword>
<keyword id="KW-0227">DNA damage</keyword>
<keyword id="KW-0234">DNA repair</keyword>
<keyword id="KW-0238">DNA-binding</keyword>
<keyword id="KW-0547">Nucleotide-binding</keyword>
<keyword id="KW-1185">Reference proteome</keyword>
<protein>
    <recommendedName>
        <fullName evidence="1">DNA mismatch repair protein MutS</fullName>
    </recommendedName>
</protein>
<evidence type="ECO:0000255" key="1">
    <source>
        <dbReference type="HAMAP-Rule" id="MF_00096"/>
    </source>
</evidence>
<evidence type="ECO:0000256" key="2">
    <source>
        <dbReference type="SAM" id="MobiDB-lite"/>
    </source>
</evidence>
<evidence type="ECO:0000305" key="3"/>
<reference key="1">
    <citation type="journal article" date="2004" name="Proc. Natl. Acad. Sci. U.S.A.">
        <title>Genome sequence of the deep-sea gamma-proteobacterium Idiomarina loihiensis reveals amino acid fermentation as a source of carbon and energy.</title>
        <authorList>
            <person name="Hou S."/>
            <person name="Saw J.H."/>
            <person name="Lee K.S."/>
            <person name="Freitas T.A."/>
            <person name="Belisle C."/>
            <person name="Kawarabayasi Y."/>
            <person name="Donachie S.P."/>
            <person name="Pikina A."/>
            <person name="Galperin M.Y."/>
            <person name="Koonin E.V."/>
            <person name="Makarova K.S."/>
            <person name="Omelchenko M.V."/>
            <person name="Sorokin A."/>
            <person name="Wolf Y.I."/>
            <person name="Li Q.X."/>
            <person name="Keum Y.S."/>
            <person name="Campbell S."/>
            <person name="Denery J."/>
            <person name="Aizawa S."/>
            <person name="Shibata S."/>
            <person name="Malahoff A."/>
            <person name="Alam M."/>
        </authorList>
    </citation>
    <scope>NUCLEOTIDE SEQUENCE [LARGE SCALE GENOMIC DNA]</scope>
    <source>
        <strain>ATCC BAA-735 / DSM 15497 / L2-TR</strain>
    </source>
</reference>
<accession>Q5QUB6</accession>
<feature type="chain" id="PRO_0000224376" description="DNA mismatch repair protein MutS">
    <location>
        <begin position="1"/>
        <end position="871"/>
    </location>
</feature>
<feature type="region of interest" description="Disordered" evidence="2">
    <location>
        <begin position="806"/>
        <end position="837"/>
    </location>
</feature>
<feature type="binding site" evidence="1">
    <location>
        <begin position="620"/>
        <end position="627"/>
    </location>
    <ligand>
        <name>ATP</name>
        <dbReference type="ChEBI" id="CHEBI:30616"/>
    </ligand>
</feature>
<organism>
    <name type="scientific">Idiomarina loihiensis (strain ATCC BAA-735 / DSM 15497 / L2-TR)</name>
    <dbReference type="NCBI Taxonomy" id="283942"/>
    <lineage>
        <taxon>Bacteria</taxon>
        <taxon>Pseudomonadati</taxon>
        <taxon>Pseudomonadota</taxon>
        <taxon>Gammaproteobacteria</taxon>
        <taxon>Alteromonadales</taxon>
        <taxon>Idiomarinaceae</taxon>
        <taxon>Idiomarina</taxon>
    </lineage>
</organism>
<proteinExistence type="inferred from homology"/>
<dbReference type="EMBL" id="AE017340">
    <property type="protein sequence ID" value="AAV81585.1"/>
    <property type="status" value="ALT_INIT"/>
    <property type="molecule type" value="Genomic_DNA"/>
</dbReference>
<dbReference type="RefSeq" id="WP_041291755.1">
    <property type="nucleotide sequence ID" value="NC_006512.1"/>
</dbReference>
<dbReference type="SMR" id="Q5QUB6"/>
<dbReference type="STRING" id="283942.IL0744"/>
<dbReference type="GeneID" id="41335898"/>
<dbReference type="KEGG" id="ilo:IL0744"/>
<dbReference type="eggNOG" id="COG0249">
    <property type="taxonomic scope" value="Bacteria"/>
</dbReference>
<dbReference type="HOGENOM" id="CLU_002472_4_1_6"/>
<dbReference type="Proteomes" id="UP000001171">
    <property type="component" value="Chromosome"/>
</dbReference>
<dbReference type="GO" id="GO:0005829">
    <property type="term" value="C:cytosol"/>
    <property type="evidence" value="ECO:0007669"/>
    <property type="project" value="TreeGrafter"/>
</dbReference>
<dbReference type="GO" id="GO:0005524">
    <property type="term" value="F:ATP binding"/>
    <property type="evidence" value="ECO:0007669"/>
    <property type="project" value="UniProtKB-UniRule"/>
</dbReference>
<dbReference type="GO" id="GO:0140664">
    <property type="term" value="F:ATP-dependent DNA damage sensor activity"/>
    <property type="evidence" value="ECO:0007669"/>
    <property type="project" value="InterPro"/>
</dbReference>
<dbReference type="GO" id="GO:0003684">
    <property type="term" value="F:damaged DNA binding"/>
    <property type="evidence" value="ECO:0007669"/>
    <property type="project" value="UniProtKB-UniRule"/>
</dbReference>
<dbReference type="GO" id="GO:0030983">
    <property type="term" value="F:mismatched DNA binding"/>
    <property type="evidence" value="ECO:0007669"/>
    <property type="project" value="InterPro"/>
</dbReference>
<dbReference type="GO" id="GO:0006298">
    <property type="term" value="P:mismatch repair"/>
    <property type="evidence" value="ECO:0007669"/>
    <property type="project" value="UniProtKB-UniRule"/>
</dbReference>
<dbReference type="CDD" id="cd03284">
    <property type="entry name" value="ABC_MutS1"/>
    <property type="match status" value="1"/>
</dbReference>
<dbReference type="FunFam" id="1.10.1420.10:FF:000002">
    <property type="entry name" value="DNA mismatch repair protein MutS"/>
    <property type="match status" value="1"/>
</dbReference>
<dbReference type="FunFam" id="3.40.1170.10:FF:000001">
    <property type="entry name" value="DNA mismatch repair protein MutS"/>
    <property type="match status" value="1"/>
</dbReference>
<dbReference type="FunFam" id="3.40.50.300:FF:000283">
    <property type="entry name" value="DNA mismatch repair protein MutS"/>
    <property type="match status" value="1"/>
</dbReference>
<dbReference type="Gene3D" id="1.10.1420.10">
    <property type="match status" value="2"/>
</dbReference>
<dbReference type="Gene3D" id="6.10.140.430">
    <property type="match status" value="1"/>
</dbReference>
<dbReference type="Gene3D" id="3.40.1170.10">
    <property type="entry name" value="DNA repair protein MutS, domain I"/>
    <property type="match status" value="1"/>
</dbReference>
<dbReference type="Gene3D" id="3.30.420.110">
    <property type="entry name" value="MutS, connector domain"/>
    <property type="match status" value="1"/>
</dbReference>
<dbReference type="Gene3D" id="3.40.50.300">
    <property type="entry name" value="P-loop containing nucleotide triphosphate hydrolases"/>
    <property type="match status" value="1"/>
</dbReference>
<dbReference type="HAMAP" id="MF_00096">
    <property type="entry name" value="MutS"/>
    <property type="match status" value="1"/>
</dbReference>
<dbReference type="InterPro" id="IPR005748">
    <property type="entry name" value="DNA_mismatch_repair_MutS"/>
</dbReference>
<dbReference type="InterPro" id="IPR007695">
    <property type="entry name" value="DNA_mismatch_repair_MutS-lik_N"/>
</dbReference>
<dbReference type="InterPro" id="IPR017261">
    <property type="entry name" value="DNA_mismatch_repair_MutS/MSH"/>
</dbReference>
<dbReference type="InterPro" id="IPR000432">
    <property type="entry name" value="DNA_mismatch_repair_MutS_C"/>
</dbReference>
<dbReference type="InterPro" id="IPR007861">
    <property type="entry name" value="DNA_mismatch_repair_MutS_clamp"/>
</dbReference>
<dbReference type="InterPro" id="IPR007696">
    <property type="entry name" value="DNA_mismatch_repair_MutS_core"/>
</dbReference>
<dbReference type="InterPro" id="IPR016151">
    <property type="entry name" value="DNA_mismatch_repair_MutS_N"/>
</dbReference>
<dbReference type="InterPro" id="IPR036187">
    <property type="entry name" value="DNA_mismatch_repair_MutS_sf"/>
</dbReference>
<dbReference type="InterPro" id="IPR007860">
    <property type="entry name" value="DNA_mmatch_repair_MutS_con_dom"/>
</dbReference>
<dbReference type="InterPro" id="IPR045076">
    <property type="entry name" value="MutS"/>
</dbReference>
<dbReference type="InterPro" id="IPR036678">
    <property type="entry name" value="MutS_con_dom_sf"/>
</dbReference>
<dbReference type="InterPro" id="IPR027417">
    <property type="entry name" value="P-loop_NTPase"/>
</dbReference>
<dbReference type="NCBIfam" id="TIGR01070">
    <property type="entry name" value="mutS1"/>
    <property type="match status" value="1"/>
</dbReference>
<dbReference type="NCBIfam" id="NF003810">
    <property type="entry name" value="PRK05399.1"/>
    <property type="match status" value="1"/>
</dbReference>
<dbReference type="PANTHER" id="PTHR11361:SF34">
    <property type="entry name" value="DNA MISMATCH REPAIR PROTEIN MSH1, MITOCHONDRIAL"/>
    <property type="match status" value="1"/>
</dbReference>
<dbReference type="PANTHER" id="PTHR11361">
    <property type="entry name" value="DNA MISMATCH REPAIR PROTEIN MUTS FAMILY MEMBER"/>
    <property type="match status" value="1"/>
</dbReference>
<dbReference type="Pfam" id="PF01624">
    <property type="entry name" value="MutS_I"/>
    <property type="match status" value="1"/>
</dbReference>
<dbReference type="Pfam" id="PF05188">
    <property type="entry name" value="MutS_II"/>
    <property type="match status" value="1"/>
</dbReference>
<dbReference type="Pfam" id="PF05192">
    <property type="entry name" value="MutS_III"/>
    <property type="match status" value="1"/>
</dbReference>
<dbReference type="Pfam" id="PF05190">
    <property type="entry name" value="MutS_IV"/>
    <property type="match status" value="1"/>
</dbReference>
<dbReference type="Pfam" id="PF00488">
    <property type="entry name" value="MutS_V"/>
    <property type="match status" value="1"/>
</dbReference>
<dbReference type="PIRSF" id="PIRSF037677">
    <property type="entry name" value="DNA_mis_repair_Msh6"/>
    <property type="match status" value="1"/>
</dbReference>
<dbReference type="SMART" id="SM00534">
    <property type="entry name" value="MUTSac"/>
    <property type="match status" value="1"/>
</dbReference>
<dbReference type="SMART" id="SM00533">
    <property type="entry name" value="MUTSd"/>
    <property type="match status" value="1"/>
</dbReference>
<dbReference type="SUPFAM" id="SSF55271">
    <property type="entry name" value="DNA repair protein MutS, domain I"/>
    <property type="match status" value="1"/>
</dbReference>
<dbReference type="SUPFAM" id="SSF53150">
    <property type="entry name" value="DNA repair protein MutS, domain II"/>
    <property type="match status" value="1"/>
</dbReference>
<dbReference type="SUPFAM" id="SSF48334">
    <property type="entry name" value="DNA repair protein MutS, domain III"/>
    <property type="match status" value="1"/>
</dbReference>
<dbReference type="SUPFAM" id="SSF52540">
    <property type="entry name" value="P-loop containing nucleoside triphosphate hydrolases"/>
    <property type="match status" value="1"/>
</dbReference>
<dbReference type="PROSITE" id="PS00486">
    <property type="entry name" value="DNA_MISMATCH_REPAIR_2"/>
    <property type="match status" value="1"/>
</dbReference>
<sequence>MPEFSDKQIQSHTPMMQQYLRIKAEHADMLLFYRMGDFYELFFEDAKRSAQLLDISLTARGQSNGEPIPMAGVPYHAVENYLARLVNMGESVAICEQIGDPATSKGPVERKVVRIVTPGTVTDESLLAEKRQNLLVAICPLNPKQPEAEYAISSLELSSGRFWLTKAHSSEQLAAEMQRLEPAELLYPESISLAGLPLAKAKCKRRPAWEFEQQTAFMLLTRQFGTQHLEGFGIKNNEPTLAAAGAILHYVKETQRAALPHIQALITEHPQDAIILDAATRRNLELQQSMGEGDTHLSAVLDKTVSAMGSRQFQRWLQRPIRNHQELNQRYDAVDALKENLNFENIQLTLKQLADIERIVARVGLRSARPKDFARLRDSLAKIPEVRASLSHRSLSYLHDIIEPFPEVVDLLTKAVIEQPPLLIRDGGVIAEGYDKELDELRDLATGATDYLKQLEQRERERSGIATLKVGYNRVHGYFIEVSRQSSEAVPDDYQRRQTLKNTERYIIPELKEHEDKVLNAQARSLAREKWLYDQLFEHLLPQVTALQKSASGLAQLDTLCCFARLADNYRYCRPQLQKETSLIELEAARHPVIEQLSDEPFIANPMSLTPQQRMLMITGPNMGGKSTYMRQAALIVILAHMGCYVPADKAIIGDIDRIFTRIGASDDLASGRSTFMVEMTETANILHNATAKSLVLMDEIGRGTSTYDGLSLAWSCADYLSRQLQCLTLFATHYFELTELAEELPATVNVHVDAKEHGDTIAFLHKVSPGAASQSFGLQVAKLAGVPEHVIHKAKQKLSELEHTHHGGLNEPKQATMELTPPPEAIPSHTEKRNPLLDELEQLDINDLTPKQALDILYQWQQKQKGSTQS</sequence>
<name>MUTS_IDILO</name>
<gene>
    <name evidence="1" type="primary">mutS</name>
    <name type="ordered locus">IL0744</name>
</gene>